<reference key="1">
    <citation type="journal article" date="2000" name="Nature">
        <title>Sequence and analysis of chromosome 3 of the plant Arabidopsis thaliana.</title>
        <authorList>
            <person name="Salanoubat M."/>
            <person name="Lemcke K."/>
            <person name="Rieger M."/>
            <person name="Ansorge W."/>
            <person name="Unseld M."/>
            <person name="Fartmann B."/>
            <person name="Valle G."/>
            <person name="Bloecker H."/>
            <person name="Perez-Alonso M."/>
            <person name="Obermaier B."/>
            <person name="Delseny M."/>
            <person name="Boutry M."/>
            <person name="Grivell L.A."/>
            <person name="Mache R."/>
            <person name="Puigdomenech P."/>
            <person name="De Simone V."/>
            <person name="Choisne N."/>
            <person name="Artiguenave F."/>
            <person name="Robert C."/>
            <person name="Brottier P."/>
            <person name="Wincker P."/>
            <person name="Cattolico L."/>
            <person name="Weissenbach J."/>
            <person name="Saurin W."/>
            <person name="Quetier F."/>
            <person name="Schaefer M."/>
            <person name="Mueller-Auer S."/>
            <person name="Gabel C."/>
            <person name="Fuchs M."/>
            <person name="Benes V."/>
            <person name="Wurmbach E."/>
            <person name="Drzonek H."/>
            <person name="Erfle H."/>
            <person name="Jordan N."/>
            <person name="Bangert S."/>
            <person name="Wiedelmann R."/>
            <person name="Kranz H."/>
            <person name="Voss H."/>
            <person name="Holland R."/>
            <person name="Brandt P."/>
            <person name="Nyakatura G."/>
            <person name="Vezzi A."/>
            <person name="D'Angelo M."/>
            <person name="Pallavicini A."/>
            <person name="Toppo S."/>
            <person name="Simionati B."/>
            <person name="Conrad A."/>
            <person name="Hornischer K."/>
            <person name="Kauer G."/>
            <person name="Loehnert T.-H."/>
            <person name="Nordsiek G."/>
            <person name="Reichelt J."/>
            <person name="Scharfe M."/>
            <person name="Schoen O."/>
            <person name="Bargues M."/>
            <person name="Terol J."/>
            <person name="Climent J."/>
            <person name="Navarro P."/>
            <person name="Collado C."/>
            <person name="Perez-Perez A."/>
            <person name="Ottenwaelder B."/>
            <person name="Duchemin D."/>
            <person name="Cooke R."/>
            <person name="Laudie M."/>
            <person name="Berger-Llauro C."/>
            <person name="Purnelle B."/>
            <person name="Masuy D."/>
            <person name="de Haan M."/>
            <person name="Maarse A.C."/>
            <person name="Alcaraz J.-P."/>
            <person name="Cottet A."/>
            <person name="Casacuberta E."/>
            <person name="Monfort A."/>
            <person name="Argiriou A."/>
            <person name="Flores M."/>
            <person name="Liguori R."/>
            <person name="Vitale D."/>
            <person name="Mannhaupt G."/>
            <person name="Haase D."/>
            <person name="Schoof H."/>
            <person name="Rudd S."/>
            <person name="Zaccaria P."/>
            <person name="Mewes H.-W."/>
            <person name="Mayer K.F.X."/>
            <person name="Kaul S."/>
            <person name="Town C.D."/>
            <person name="Koo H.L."/>
            <person name="Tallon L.J."/>
            <person name="Jenkins J."/>
            <person name="Rooney T."/>
            <person name="Rizzo M."/>
            <person name="Walts A."/>
            <person name="Utterback T."/>
            <person name="Fujii C.Y."/>
            <person name="Shea T.P."/>
            <person name="Creasy T.H."/>
            <person name="Haas B."/>
            <person name="Maiti R."/>
            <person name="Wu D."/>
            <person name="Peterson J."/>
            <person name="Van Aken S."/>
            <person name="Pai G."/>
            <person name="Militscher J."/>
            <person name="Sellers P."/>
            <person name="Gill J.E."/>
            <person name="Feldblyum T.V."/>
            <person name="Preuss D."/>
            <person name="Lin X."/>
            <person name="Nierman W.C."/>
            <person name="Salzberg S.L."/>
            <person name="White O."/>
            <person name="Venter J.C."/>
            <person name="Fraser C.M."/>
            <person name="Kaneko T."/>
            <person name="Nakamura Y."/>
            <person name="Sato S."/>
            <person name="Kato T."/>
            <person name="Asamizu E."/>
            <person name="Sasamoto S."/>
            <person name="Kimura T."/>
            <person name="Idesawa K."/>
            <person name="Kawashima K."/>
            <person name="Kishida Y."/>
            <person name="Kiyokawa C."/>
            <person name="Kohara M."/>
            <person name="Matsumoto M."/>
            <person name="Matsuno A."/>
            <person name="Muraki A."/>
            <person name="Nakayama S."/>
            <person name="Nakazaki N."/>
            <person name="Shinpo S."/>
            <person name="Takeuchi C."/>
            <person name="Wada T."/>
            <person name="Watanabe A."/>
            <person name="Yamada M."/>
            <person name="Yasuda M."/>
            <person name="Tabata S."/>
        </authorList>
    </citation>
    <scope>NUCLEOTIDE SEQUENCE [LARGE SCALE GENOMIC DNA]</scope>
    <source>
        <strain>cv. Columbia</strain>
    </source>
</reference>
<reference key="2">
    <citation type="journal article" date="2017" name="Plant J.">
        <title>Araport11: a complete reannotation of the Arabidopsis thaliana reference genome.</title>
        <authorList>
            <person name="Cheng C.Y."/>
            <person name="Krishnakumar V."/>
            <person name="Chan A.P."/>
            <person name="Thibaud-Nissen F."/>
            <person name="Schobel S."/>
            <person name="Town C.D."/>
        </authorList>
    </citation>
    <scope>GENOME REANNOTATION</scope>
    <source>
        <strain>cv. Columbia</strain>
    </source>
</reference>
<reference key="3">
    <citation type="journal article" date="2003" name="Science">
        <title>Empirical analysis of transcriptional activity in the Arabidopsis genome.</title>
        <authorList>
            <person name="Yamada K."/>
            <person name="Lim J."/>
            <person name="Dale J.M."/>
            <person name="Chen H."/>
            <person name="Shinn P."/>
            <person name="Palm C.J."/>
            <person name="Southwick A.M."/>
            <person name="Wu H.C."/>
            <person name="Kim C.J."/>
            <person name="Nguyen M."/>
            <person name="Pham P.K."/>
            <person name="Cheuk R.F."/>
            <person name="Karlin-Newmann G."/>
            <person name="Liu S.X."/>
            <person name="Lam B."/>
            <person name="Sakano H."/>
            <person name="Wu T."/>
            <person name="Yu G."/>
            <person name="Miranda M."/>
            <person name="Quach H.L."/>
            <person name="Tripp M."/>
            <person name="Chang C.H."/>
            <person name="Lee J.M."/>
            <person name="Toriumi M.J."/>
            <person name="Chan M.M."/>
            <person name="Tang C.C."/>
            <person name="Onodera C.S."/>
            <person name="Deng J.M."/>
            <person name="Akiyama K."/>
            <person name="Ansari Y."/>
            <person name="Arakawa T."/>
            <person name="Banh J."/>
            <person name="Banno F."/>
            <person name="Bowser L."/>
            <person name="Brooks S.Y."/>
            <person name="Carninci P."/>
            <person name="Chao Q."/>
            <person name="Choy N."/>
            <person name="Enju A."/>
            <person name="Goldsmith A.D."/>
            <person name="Gurjal M."/>
            <person name="Hansen N.F."/>
            <person name="Hayashizaki Y."/>
            <person name="Johnson-Hopson C."/>
            <person name="Hsuan V.W."/>
            <person name="Iida K."/>
            <person name="Karnes M."/>
            <person name="Khan S."/>
            <person name="Koesema E."/>
            <person name="Ishida J."/>
            <person name="Jiang P.X."/>
            <person name="Jones T."/>
            <person name="Kawai J."/>
            <person name="Kamiya A."/>
            <person name="Meyers C."/>
            <person name="Nakajima M."/>
            <person name="Narusaka M."/>
            <person name="Seki M."/>
            <person name="Sakurai T."/>
            <person name="Satou M."/>
            <person name="Tamse R."/>
            <person name="Vaysberg M."/>
            <person name="Wallender E.K."/>
            <person name="Wong C."/>
            <person name="Yamamura Y."/>
            <person name="Yuan S."/>
            <person name="Shinozaki K."/>
            <person name="Davis R.W."/>
            <person name="Theologis A."/>
            <person name="Ecker J.R."/>
        </authorList>
    </citation>
    <scope>NUCLEOTIDE SEQUENCE [LARGE SCALE MRNA]</scope>
    <source>
        <strain>cv. Columbia</strain>
    </source>
</reference>
<reference key="4">
    <citation type="submission" date="2004-06" db="EMBL/GenBank/DDBJ databases">
        <title>Arabidopsis ORF clones.</title>
        <authorList>
            <person name="Cheuk R.F."/>
            <person name="Chen H."/>
            <person name="Kim C.J."/>
            <person name="Shinn P."/>
            <person name="Ecker J.R."/>
        </authorList>
    </citation>
    <scope>NUCLEOTIDE SEQUENCE [LARGE SCALE MRNA]</scope>
    <source>
        <strain>cv. Columbia</strain>
    </source>
</reference>
<reference key="5">
    <citation type="journal article" date="2010" name="Proc. Natl. Acad. Sci. U.S.A.">
        <title>Putative Arabidopsis THO/TREX mRNA export complex is involved in transgene and endogenous siRNA biosynthesis.</title>
        <authorList>
            <person name="Yelina N.E."/>
            <person name="Smith L.M."/>
            <person name="Jones A.M."/>
            <person name="Patel K."/>
            <person name="Kelly K.A."/>
            <person name="Baulcombe D.C."/>
        </authorList>
    </citation>
    <scope>IDENTIFICATION BY MASS SPECTROMETRY</scope>
    <scope>SUBUNIT</scope>
</reference>
<feature type="chain" id="PRO_0000425592" description="THO complex subunit 7B">
    <location>
        <begin position="1"/>
        <end position="236"/>
    </location>
</feature>
<feature type="coiled-coil region" evidence="2">
    <location>
        <begin position="99"/>
        <end position="228"/>
    </location>
</feature>
<dbReference type="EMBL" id="AC018363">
    <property type="protein sequence ID" value="AAF26964.1"/>
    <property type="molecule type" value="Genomic_DNA"/>
</dbReference>
<dbReference type="EMBL" id="CP002686">
    <property type="protein sequence ID" value="AEE73884.1"/>
    <property type="molecule type" value="Genomic_DNA"/>
</dbReference>
<dbReference type="EMBL" id="CP002686">
    <property type="protein sequence ID" value="ANM65748.1"/>
    <property type="molecule type" value="Genomic_DNA"/>
</dbReference>
<dbReference type="EMBL" id="AF424596">
    <property type="protein sequence ID" value="AAL11590.1"/>
    <property type="molecule type" value="mRNA"/>
</dbReference>
<dbReference type="EMBL" id="BT014879">
    <property type="protein sequence ID" value="AAT41862.1"/>
    <property type="molecule type" value="mRNA"/>
</dbReference>
<dbReference type="RefSeq" id="NP_001327695.1">
    <property type="nucleotide sequence ID" value="NM_001337451.1"/>
</dbReference>
<dbReference type="RefSeq" id="NP_566189.1">
    <property type="nucleotide sequence ID" value="NM_111165.4"/>
</dbReference>
<dbReference type="SMR" id="Q9M8T6"/>
<dbReference type="BioGRID" id="6507">
    <property type="interactions" value="95"/>
</dbReference>
<dbReference type="FunCoup" id="Q9M8T6">
    <property type="interactions" value="3516"/>
</dbReference>
<dbReference type="STRING" id="3702.Q9M8T6"/>
<dbReference type="iPTMnet" id="Q9M8T6"/>
<dbReference type="PaxDb" id="3702-AT3G02950.1"/>
<dbReference type="ProteomicsDB" id="246463"/>
<dbReference type="EnsemblPlants" id="AT3G02950.1">
    <property type="protein sequence ID" value="AT3G02950.1"/>
    <property type="gene ID" value="AT3G02950"/>
</dbReference>
<dbReference type="EnsemblPlants" id="AT3G02950.2">
    <property type="protein sequence ID" value="AT3G02950.2"/>
    <property type="gene ID" value="AT3G02950"/>
</dbReference>
<dbReference type="GeneID" id="821174"/>
<dbReference type="Gramene" id="AT3G02950.1">
    <property type="protein sequence ID" value="AT3G02950.1"/>
    <property type="gene ID" value="AT3G02950"/>
</dbReference>
<dbReference type="Gramene" id="AT3G02950.2">
    <property type="protein sequence ID" value="AT3G02950.2"/>
    <property type="gene ID" value="AT3G02950"/>
</dbReference>
<dbReference type="KEGG" id="ath:AT3G02950"/>
<dbReference type="Araport" id="AT3G02950"/>
<dbReference type="TAIR" id="AT3G02950">
    <property type="gene designation" value="THO7"/>
</dbReference>
<dbReference type="eggNOG" id="KOG3215">
    <property type="taxonomic scope" value="Eukaryota"/>
</dbReference>
<dbReference type="HOGENOM" id="CLU_076737_0_0_1"/>
<dbReference type="InParanoid" id="Q9M8T6"/>
<dbReference type="OMA" id="SHYAFGP"/>
<dbReference type="OrthoDB" id="205166at2759"/>
<dbReference type="PhylomeDB" id="Q9M8T6"/>
<dbReference type="PRO" id="PR:Q9M8T6"/>
<dbReference type="Proteomes" id="UP000006548">
    <property type="component" value="Chromosome 3"/>
</dbReference>
<dbReference type="ExpressionAtlas" id="Q9M8T6">
    <property type="expression patterns" value="baseline and differential"/>
</dbReference>
<dbReference type="GO" id="GO:0000347">
    <property type="term" value="C:THO complex"/>
    <property type="evidence" value="ECO:0000314"/>
    <property type="project" value="UniProtKB"/>
</dbReference>
<dbReference type="GO" id="GO:0000445">
    <property type="term" value="C:THO complex part of transcription export complex"/>
    <property type="evidence" value="ECO:0007669"/>
    <property type="project" value="InterPro"/>
</dbReference>
<dbReference type="GO" id="GO:0003723">
    <property type="term" value="F:RNA binding"/>
    <property type="evidence" value="ECO:0007669"/>
    <property type="project" value="UniProtKB-KW"/>
</dbReference>
<dbReference type="GO" id="GO:0006397">
    <property type="term" value="P:mRNA processing"/>
    <property type="evidence" value="ECO:0007669"/>
    <property type="project" value="UniProtKB-KW"/>
</dbReference>
<dbReference type="GO" id="GO:0051028">
    <property type="term" value="P:mRNA transport"/>
    <property type="evidence" value="ECO:0007669"/>
    <property type="project" value="UniProtKB-KW"/>
</dbReference>
<dbReference type="GO" id="GO:0008380">
    <property type="term" value="P:RNA splicing"/>
    <property type="evidence" value="ECO:0007669"/>
    <property type="project" value="UniProtKB-KW"/>
</dbReference>
<dbReference type="InterPro" id="IPR008501">
    <property type="entry name" value="THOC7/Mft1"/>
</dbReference>
<dbReference type="PANTHER" id="PTHR23405">
    <property type="entry name" value="MAINTENANCE OF KILLER 16 MAK16 PROTEIN-RELATED"/>
    <property type="match status" value="1"/>
</dbReference>
<dbReference type="PANTHER" id="PTHR23405:SF5">
    <property type="entry name" value="THO COMPLEX SUBUNIT 7 HOMOLOG"/>
    <property type="match status" value="1"/>
</dbReference>
<dbReference type="Pfam" id="PF05615">
    <property type="entry name" value="THOC7"/>
    <property type="match status" value="1"/>
</dbReference>
<organism>
    <name type="scientific">Arabidopsis thaliana</name>
    <name type="common">Mouse-ear cress</name>
    <dbReference type="NCBI Taxonomy" id="3702"/>
    <lineage>
        <taxon>Eukaryota</taxon>
        <taxon>Viridiplantae</taxon>
        <taxon>Streptophyta</taxon>
        <taxon>Embryophyta</taxon>
        <taxon>Tracheophyta</taxon>
        <taxon>Spermatophyta</taxon>
        <taxon>Magnoliopsida</taxon>
        <taxon>eudicotyledons</taxon>
        <taxon>Gunneridae</taxon>
        <taxon>Pentapetalae</taxon>
        <taxon>rosids</taxon>
        <taxon>malvids</taxon>
        <taxon>Brassicales</taxon>
        <taxon>Brassicaceae</taxon>
        <taxon>Camelineae</taxon>
        <taxon>Arabidopsis</taxon>
    </lineage>
</organism>
<name>THO7B_ARATH</name>
<accession>Q9M8T6</accession>
<comment type="function">
    <text evidence="1">Acts as a component of the THO subcomplex of the TREX complex which is thought to couple mRNA transcription, processing and nuclear export.</text>
</comment>
<comment type="subunit">
    <text evidence="3">Component of the THO complex, which is composed of THO1, THO2, THO3, THO5, THO6 and THO7.</text>
</comment>
<comment type="subcellular location">
    <subcellularLocation>
        <location evidence="4">Nucleus</location>
    </subcellularLocation>
</comment>
<comment type="similarity">
    <text evidence="4">Belongs to the THOC7 family.</text>
</comment>
<sequence length="236" mass="27461">MSVKARRISGRLETVVTKVNYAFDPVDDDKIIRNRLLTRTTTTRGEPPLKKLQKKFTSFVLEVDKEEENYNDCGRLAKAFLQELSTFEIPLLKSQAVVEANLREKESFNEVKDETERQIMQAKAEIEDLKKQLEESKIDRQHKEECETIRKLISAQPPRSETEKVIYELNKEIAELEAESTASWRLLELRKKQFALLMHVVDELQNTMEDEQKSLVDEIRSASEDQRNITDAMSVD</sequence>
<protein>
    <recommendedName>
        <fullName>THO complex subunit 7B</fullName>
    </recommendedName>
    <alternativeName>
        <fullName>THO complex subunit 7</fullName>
        <shortName>AtTHO7</shortName>
    </alternativeName>
</protein>
<evidence type="ECO:0000250" key="1"/>
<evidence type="ECO:0000255" key="2"/>
<evidence type="ECO:0000269" key="3">
    <source>
    </source>
</evidence>
<evidence type="ECO:0000305" key="4"/>
<proteinExistence type="evidence at protein level"/>
<keyword id="KW-0175">Coiled coil</keyword>
<keyword id="KW-0507">mRNA processing</keyword>
<keyword id="KW-0508">mRNA splicing</keyword>
<keyword id="KW-0509">mRNA transport</keyword>
<keyword id="KW-0539">Nucleus</keyword>
<keyword id="KW-1185">Reference proteome</keyword>
<keyword id="KW-0694">RNA-binding</keyword>
<keyword id="KW-0813">Transport</keyword>
<gene>
    <name type="primary">THO7B</name>
    <name type="synonym">THOC7A</name>
    <name type="ordered locus">At3g02950</name>
    <name type="ORF">F13E7.10</name>
</gene>